<dbReference type="EC" id="2.7.1.147"/>
<dbReference type="EMBL" id="AK011434">
    <property type="protein sequence ID" value="BAB27619.1"/>
    <property type="molecule type" value="mRNA"/>
</dbReference>
<dbReference type="EMBL" id="AK048904">
    <property type="protein sequence ID" value="BAC33486.1"/>
    <property type="molecule type" value="mRNA"/>
</dbReference>
<dbReference type="EMBL" id="BC021526">
    <property type="protein sequence ID" value="AAH21526.1"/>
    <property type="molecule type" value="mRNA"/>
</dbReference>
<dbReference type="CCDS" id="CCDS23248.1">
    <molecule id="Q8VDL4-1"/>
</dbReference>
<dbReference type="CCDS" id="CCDS90583.1">
    <molecule id="Q8VDL4-3"/>
</dbReference>
<dbReference type="RefSeq" id="NP_082397.1">
    <property type="nucleotide sequence ID" value="NM_028121.2"/>
</dbReference>
<dbReference type="PDB" id="5CCF">
    <property type="method" value="X-ray"/>
    <property type="resolution" value="2.10 A"/>
    <property type="chains" value="A=51-496"/>
</dbReference>
<dbReference type="PDB" id="5CK7">
    <property type="method" value="X-ray"/>
    <property type="resolution" value="2.99 A"/>
    <property type="chains" value="A=51-496"/>
</dbReference>
<dbReference type="PDBsum" id="5CCF"/>
<dbReference type="PDBsum" id="5CK7"/>
<dbReference type="SMR" id="Q8VDL4"/>
<dbReference type="BioGRID" id="215179">
    <property type="interactions" value="4"/>
</dbReference>
<dbReference type="FunCoup" id="Q8VDL4">
    <property type="interactions" value="1719"/>
</dbReference>
<dbReference type="STRING" id="10090.ENSMUSP00000149882"/>
<dbReference type="PhosphoSitePlus" id="Q8VDL4"/>
<dbReference type="SwissPalm" id="Q8VDL4"/>
<dbReference type="jPOST" id="Q8VDL4"/>
<dbReference type="PaxDb" id="10090-ENSMUSP00000026266"/>
<dbReference type="PeptideAtlas" id="Q8VDL4"/>
<dbReference type="ProteomicsDB" id="296113">
    <molecule id="Q8VDL4-1"/>
</dbReference>
<dbReference type="ProteomicsDB" id="296114">
    <molecule id="Q8VDL4-2"/>
</dbReference>
<dbReference type="ProteomicsDB" id="296115">
    <molecule id="Q8VDL4-3"/>
</dbReference>
<dbReference type="Pumba" id="Q8VDL4"/>
<dbReference type="DNASU" id="72141"/>
<dbReference type="GeneID" id="72141"/>
<dbReference type="KEGG" id="mmu:72141"/>
<dbReference type="UCSC" id="uc009pxo.1">
    <molecule id="Q8VDL4-2"/>
    <property type="organism name" value="mouse"/>
</dbReference>
<dbReference type="AGR" id="MGI:1919391"/>
<dbReference type="CTD" id="83440"/>
<dbReference type="MGI" id="MGI:1919391">
    <property type="gene designation" value="Adpgk"/>
</dbReference>
<dbReference type="eggNOG" id="KOG4184">
    <property type="taxonomic scope" value="Eukaryota"/>
</dbReference>
<dbReference type="InParanoid" id="Q8VDL4"/>
<dbReference type="OrthoDB" id="5847021at2759"/>
<dbReference type="PhylomeDB" id="Q8VDL4"/>
<dbReference type="TreeFam" id="TF313401"/>
<dbReference type="BRENDA" id="2.7.1.147">
    <property type="organism ID" value="3474"/>
</dbReference>
<dbReference type="Reactome" id="R-MMU-70171">
    <property type="pathway name" value="Glycolysis"/>
</dbReference>
<dbReference type="SABIO-RK" id="Q8VDL4"/>
<dbReference type="UniPathway" id="UPA00109"/>
<dbReference type="BioGRID-ORCS" id="72141">
    <property type="hits" value="2 hits in 77 CRISPR screens"/>
</dbReference>
<dbReference type="ChiTaRS" id="Adpgk">
    <property type="organism name" value="mouse"/>
</dbReference>
<dbReference type="PRO" id="PR:Q8VDL4"/>
<dbReference type="Proteomes" id="UP000000589">
    <property type="component" value="Unplaced"/>
</dbReference>
<dbReference type="RNAct" id="Q8VDL4">
    <property type="molecule type" value="protein"/>
</dbReference>
<dbReference type="GO" id="GO:0005576">
    <property type="term" value="C:extracellular region"/>
    <property type="evidence" value="ECO:0007669"/>
    <property type="project" value="UniProtKB-SubCell"/>
</dbReference>
<dbReference type="GO" id="GO:0043843">
    <property type="term" value="F:ADP-specific glucokinase activity"/>
    <property type="evidence" value="ECO:0000314"/>
    <property type="project" value="MGI"/>
</dbReference>
<dbReference type="GO" id="GO:0046872">
    <property type="term" value="F:metal ion binding"/>
    <property type="evidence" value="ECO:0007669"/>
    <property type="project" value="UniProtKB-KW"/>
</dbReference>
<dbReference type="GO" id="GO:0006006">
    <property type="term" value="P:glucose metabolic process"/>
    <property type="evidence" value="ECO:0000314"/>
    <property type="project" value="MGI"/>
</dbReference>
<dbReference type="GO" id="GO:0006096">
    <property type="term" value="P:glycolytic process"/>
    <property type="evidence" value="ECO:0007669"/>
    <property type="project" value="UniProtKB-UniPathway"/>
</dbReference>
<dbReference type="CDD" id="cd01938">
    <property type="entry name" value="ADPGK_ADPPFK"/>
    <property type="match status" value="1"/>
</dbReference>
<dbReference type="FunFam" id="3.40.1190.20:FF:000020">
    <property type="entry name" value="ADP-dependent glucokinase isoform X1"/>
    <property type="match status" value="1"/>
</dbReference>
<dbReference type="Gene3D" id="3.40.1190.20">
    <property type="match status" value="1"/>
</dbReference>
<dbReference type="InterPro" id="IPR007666">
    <property type="entry name" value="ADP_PFK/GK"/>
</dbReference>
<dbReference type="InterPro" id="IPR029056">
    <property type="entry name" value="Ribokinase-like"/>
</dbReference>
<dbReference type="PANTHER" id="PTHR21208">
    <property type="entry name" value="ADP-DEPENDENT GLUCOKINASE"/>
    <property type="match status" value="1"/>
</dbReference>
<dbReference type="PANTHER" id="PTHR21208:SF0">
    <property type="entry name" value="ADP-DEPENDENT GLUCOKINASE"/>
    <property type="match status" value="1"/>
</dbReference>
<dbReference type="Pfam" id="PF04587">
    <property type="entry name" value="ADP_PFK_GK"/>
    <property type="match status" value="1"/>
</dbReference>
<dbReference type="SUPFAM" id="SSF53613">
    <property type="entry name" value="Ribokinase-like"/>
    <property type="match status" value="1"/>
</dbReference>
<dbReference type="PROSITE" id="PS51255">
    <property type="entry name" value="ADPK"/>
    <property type="match status" value="1"/>
</dbReference>
<gene>
    <name type="primary">Adpgk</name>
</gene>
<protein>
    <recommendedName>
        <fullName>ADP-dependent glucokinase</fullName>
        <shortName>ADP-GK</shortName>
        <shortName>ADPGK</shortName>
        <ecNumber>2.7.1.147</ecNumber>
    </recommendedName>
</protein>
<proteinExistence type="evidence at protein level"/>
<feature type="signal peptide" evidence="1">
    <location>
        <begin position="1"/>
        <end position="22"/>
    </location>
</feature>
<feature type="chain" id="PRO_0000184777" description="ADP-dependent glucokinase">
    <location>
        <begin position="23"/>
        <end position="496"/>
    </location>
</feature>
<feature type="domain" description="ADPK" evidence="2">
    <location>
        <begin position="52"/>
        <end position="496"/>
    </location>
</feature>
<feature type="active site" description="Proton acceptor" evidence="2">
    <location>
        <position position="481"/>
    </location>
</feature>
<feature type="binding site" evidence="2">
    <location>
        <position position="297"/>
    </location>
    <ligand>
        <name>Mg(2+)</name>
        <dbReference type="ChEBI" id="CHEBI:18420"/>
    </ligand>
</feature>
<feature type="binding site" evidence="2">
    <location>
        <position position="328"/>
    </location>
    <ligand>
        <name>Mg(2+)</name>
        <dbReference type="ChEBI" id="CHEBI:18420"/>
    </ligand>
</feature>
<feature type="binding site" evidence="2">
    <location>
        <position position="481"/>
    </location>
    <ligand>
        <name>Mg(2+)</name>
        <dbReference type="ChEBI" id="CHEBI:18420"/>
    </ligand>
</feature>
<feature type="splice variant" id="VSP_013555" description="In isoform 2." evidence="5">
    <original>HYVGGN</original>
    <variation>VCPTHQ</variation>
    <location>
        <begin position="154"/>
        <end position="159"/>
    </location>
</feature>
<feature type="splice variant" id="VSP_013556" description="In isoform 2." evidence="5">
    <location>
        <begin position="160"/>
        <end position="496"/>
    </location>
</feature>
<feature type="splice variant" id="VSP_013557" description="In isoform 3." evidence="4">
    <location>
        <position position="313"/>
    </location>
</feature>
<feature type="sequence conflict" description="In Ref. 1; BAB27619." evidence="6" ref="1">
    <original>A</original>
    <variation>T</variation>
    <location>
        <position position="318"/>
    </location>
</feature>
<feature type="sequence conflict" description="In Ref. 1; BAB27619." evidence="6" ref="1">
    <original>S</original>
    <variation>A</variation>
    <location>
        <position position="341"/>
    </location>
</feature>
<feature type="sequence conflict" description="In Ref. 2; AAH21526." evidence="6" ref="2">
    <original>A</original>
    <variation>S</variation>
    <location>
        <position position="373"/>
    </location>
</feature>
<feature type="helix" evidence="7">
    <location>
        <begin position="53"/>
        <end position="64"/>
    </location>
</feature>
<feature type="strand" evidence="7">
    <location>
        <begin position="73"/>
        <end position="79"/>
    </location>
</feature>
<feature type="strand" evidence="7">
    <location>
        <begin position="82"/>
        <end position="88"/>
    </location>
</feature>
<feature type="helix" evidence="7">
    <location>
        <begin position="89"/>
        <end position="95"/>
    </location>
</feature>
<feature type="strand" evidence="7">
    <location>
        <begin position="107"/>
        <end position="109"/>
    </location>
</feature>
<feature type="helix" evidence="7">
    <location>
        <begin position="112"/>
        <end position="125"/>
    </location>
</feature>
<feature type="strand" evidence="7">
    <location>
        <begin position="129"/>
        <end position="133"/>
    </location>
</feature>
<feature type="helix" evidence="7">
    <location>
        <begin position="136"/>
        <end position="148"/>
    </location>
</feature>
<feature type="strand" evidence="7">
    <location>
        <begin position="153"/>
        <end position="158"/>
    </location>
</feature>
<feature type="helix" evidence="7">
    <location>
        <begin position="159"/>
        <end position="168"/>
    </location>
</feature>
<feature type="strand" evidence="7">
    <location>
        <begin position="173"/>
        <end position="177"/>
    </location>
</feature>
<feature type="helix" evidence="7">
    <location>
        <begin position="183"/>
        <end position="188"/>
    </location>
</feature>
<feature type="helix" evidence="7">
    <location>
        <begin position="197"/>
        <end position="199"/>
    </location>
</feature>
<feature type="strand" evidence="7">
    <location>
        <begin position="206"/>
        <end position="212"/>
    </location>
</feature>
<feature type="strand" evidence="7">
    <location>
        <begin position="227"/>
        <end position="232"/>
    </location>
</feature>
<feature type="helix" evidence="7">
    <location>
        <begin position="235"/>
        <end position="238"/>
    </location>
</feature>
<feature type="turn" evidence="7">
    <location>
        <begin position="239"/>
        <end position="242"/>
    </location>
</feature>
<feature type="helix" evidence="7">
    <location>
        <begin position="243"/>
        <end position="253"/>
    </location>
</feature>
<feature type="strand" evidence="7">
    <location>
        <begin position="256"/>
        <end position="260"/>
    </location>
</feature>
<feature type="helix" evidence="7">
    <location>
        <begin position="263"/>
        <end position="266"/>
    </location>
</feature>
<feature type="helix" evidence="7">
    <location>
        <begin position="271"/>
        <end position="287"/>
    </location>
</feature>
<feature type="strand" evidence="7">
    <location>
        <begin position="294"/>
        <end position="297"/>
    </location>
</feature>
<feature type="helix" evidence="7">
    <location>
        <begin position="304"/>
        <end position="313"/>
    </location>
</feature>
<feature type="helix" evidence="7">
    <location>
        <begin position="316"/>
        <end position="318"/>
    </location>
</feature>
<feature type="strand" evidence="7">
    <location>
        <begin position="320"/>
        <end position="324"/>
    </location>
</feature>
<feature type="helix" evidence="7">
    <location>
        <begin position="326"/>
        <end position="335"/>
    </location>
</feature>
<feature type="turn" evidence="7">
    <location>
        <begin position="339"/>
        <end position="342"/>
    </location>
</feature>
<feature type="helix" evidence="7">
    <location>
        <begin position="352"/>
        <end position="366"/>
    </location>
</feature>
<feature type="turn" evidence="7">
    <location>
        <begin position="370"/>
        <end position="372"/>
    </location>
</feature>
<feature type="strand" evidence="7">
    <location>
        <begin position="378"/>
        <end position="382"/>
    </location>
</feature>
<feature type="strand" evidence="7">
    <location>
        <begin position="384"/>
        <end position="392"/>
    </location>
</feature>
<feature type="strand" evidence="7">
    <location>
        <begin position="395"/>
        <end position="397"/>
    </location>
</feature>
<feature type="helix" evidence="7">
    <location>
        <begin position="399"/>
        <end position="415"/>
    </location>
</feature>
<feature type="strand" evidence="7">
    <location>
        <begin position="424"/>
        <end position="427"/>
    </location>
</feature>
<feature type="strand" evidence="7">
    <location>
        <begin position="431"/>
        <end position="435"/>
    </location>
</feature>
<feature type="turn" evidence="7">
    <location>
        <begin position="437"/>
        <end position="440"/>
    </location>
</feature>
<feature type="strand" evidence="7">
    <location>
        <begin position="443"/>
        <end position="445"/>
    </location>
</feature>
<feature type="strand" evidence="7">
    <location>
        <begin position="453"/>
        <end position="456"/>
    </location>
</feature>
<feature type="strand" evidence="7">
    <location>
        <begin position="458"/>
        <end position="466"/>
    </location>
</feature>
<feature type="strand" evidence="7">
    <location>
        <begin position="468"/>
        <end position="472"/>
    </location>
</feature>
<feature type="helix" evidence="7">
    <location>
        <begin position="479"/>
        <end position="489"/>
    </location>
</feature>
<evidence type="ECO:0000255" key="1"/>
<evidence type="ECO:0000255" key="2">
    <source>
        <dbReference type="PROSITE-ProRule" id="PRU00584"/>
    </source>
</evidence>
<evidence type="ECO:0000269" key="3">
    <source>
    </source>
</evidence>
<evidence type="ECO:0000303" key="4">
    <source>
    </source>
</evidence>
<evidence type="ECO:0000303" key="5">
    <source>
    </source>
</evidence>
<evidence type="ECO:0000305" key="6"/>
<evidence type="ECO:0007829" key="7">
    <source>
        <dbReference type="PDB" id="5CCF"/>
    </source>
</evidence>
<organism>
    <name type="scientific">Mus musculus</name>
    <name type="common">Mouse</name>
    <dbReference type="NCBI Taxonomy" id="10090"/>
    <lineage>
        <taxon>Eukaryota</taxon>
        <taxon>Metazoa</taxon>
        <taxon>Chordata</taxon>
        <taxon>Craniata</taxon>
        <taxon>Vertebrata</taxon>
        <taxon>Euteleostomi</taxon>
        <taxon>Mammalia</taxon>
        <taxon>Eutheria</taxon>
        <taxon>Euarchontoglires</taxon>
        <taxon>Glires</taxon>
        <taxon>Rodentia</taxon>
        <taxon>Myomorpha</taxon>
        <taxon>Muroidea</taxon>
        <taxon>Muridae</taxon>
        <taxon>Murinae</taxon>
        <taxon>Mus</taxon>
        <taxon>Mus</taxon>
    </lineage>
</organism>
<comment type="function">
    <text>Catalyzes the phosphorylation of D-glucose to D-glucose 6-phosphate using ADP as the phosphate donor. GDP and CDP can replace ADP, but with reduced efficiency.</text>
</comment>
<comment type="catalytic activity">
    <reaction>
        <text>D-glucose + ADP = D-glucose 6-phosphate + AMP + H(+)</text>
        <dbReference type="Rhea" id="RHEA:11460"/>
        <dbReference type="ChEBI" id="CHEBI:4167"/>
        <dbReference type="ChEBI" id="CHEBI:15378"/>
        <dbReference type="ChEBI" id="CHEBI:61548"/>
        <dbReference type="ChEBI" id="CHEBI:456215"/>
        <dbReference type="ChEBI" id="CHEBI:456216"/>
        <dbReference type="EC" id="2.7.1.147"/>
    </reaction>
</comment>
<comment type="cofactor">
    <cofactor evidence="2">
        <name>Mg(2+)</name>
        <dbReference type="ChEBI" id="CHEBI:18420"/>
    </cofactor>
    <text evidence="2">Binds 1 Mg(2+) ion per subunit.</text>
</comment>
<comment type="biophysicochemical properties">
    <kinetics>
        <KM evidence="3">96 uM for D-glucose (at 37 degrees Celsius)</KM>
        <KM evidence="3">0.28 mM for ADP (at 37 degrees Celsius)</KM>
        <KM evidence="3">20 mM for ADP (at 37 degrees Celsius)</KM>
        <Vmax evidence="3">160.0 umol/min/mg enzyme with glucose and ADP as substrates (at 37 degrees Celsius)</Vmax>
    </kinetics>
    <phDependence>
        <text evidence="3">Optimum pH is 5.75-6.5 and 8.75-9.0.</text>
    </phDependence>
</comment>
<comment type="pathway">
    <text evidence="2">Carbohydrate degradation; glycolysis.</text>
</comment>
<comment type="subunit">
    <text evidence="3">Monomer.</text>
</comment>
<comment type="subcellular location">
    <subcellularLocation>
        <location evidence="6">Secreted</location>
    </subcellularLocation>
</comment>
<comment type="alternative products">
    <event type="alternative splicing"/>
    <isoform>
        <id>Q8VDL4-1</id>
        <name>1</name>
        <sequence type="displayed"/>
    </isoform>
    <isoform>
        <id>Q8VDL4-2</id>
        <name>2</name>
        <sequence type="described" ref="VSP_013555 VSP_013556"/>
    </isoform>
    <isoform>
        <id>Q8VDL4-3</id>
        <name>3</name>
        <sequence type="described" ref="VSP_013557"/>
    </isoform>
</comment>
<comment type="similarity">
    <text evidence="6">Belongs to the ADP-dependent glucokinase family.</text>
</comment>
<name>ADPGK_MOUSE</name>
<keyword id="KW-0002">3D-structure</keyword>
<keyword id="KW-0025">Alternative splicing</keyword>
<keyword id="KW-0324">Glycolysis</keyword>
<keyword id="KW-0418">Kinase</keyword>
<keyword id="KW-0460">Magnesium</keyword>
<keyword id="KW-0479">Metal-binding</keyword>
<keyword id="KW-1185">Reference proteome</keyword>
<keyword id="KW-0964">Secreted</keyword>
<keyword id="KW-0732">Signal</keyword>
<keyword id="KW-0808">Transferase</keyword>
<reference key="1">
    <citation type="journal article" date="2005" name="Science">
        <title>The transcriptional landscape of the mammalian genome.</title>
        <authorList>
            <person name="Carninci P."/>
            <person name="Kasukawa T."/>
            <person name="Katayama S."/>
            <person name="Gough J."/>
            <person name="Frith M.C."/>
            <person name="Maeda N."/>
            <person name="Oyama R."/>
            <person name="Ravasi T."/>
            <person name="Lenhard B."/>
            <person name="Wells C."/>
            <person name="Kodzius R."/>
            <person name="Shimokawa K."/>
            <person name="Bajic V.B."/>
            <person name="Brenner S.E."/>
            <person name="Batalov S."/>
            <person name="Forrest A.R."/>
            <person name="Zavolan M."/>
            <person name="Davis M.J."/>
            <person name="Wilming L.G."/>
            <person name="Aidinis V."/>
            <person name="Allen J.E."/>
            <person name="Ambesi-Impiombato A."/>
            <person name="Apweiler R."/>
            <person name="Aturaliya R.N."/>
            <person name="Bailey T.L."/>
            <person name="Bansal M."/>
            <person name="Baxter L."/>
            <person name="Beisel K.W."/>
            <person name="Bersano T."/>
            <person name="Bono H."/>
            <person name="Chalk A.M."/>
            <person name="Chiu K.P."/>
            <person name="Choudhary V."/>
            <person name="Christoffels A."/>
            <person name="Clutterbuck D.R."/>
            <person name="Crowe M.L."/>
            <person name="Dalla E."/>
            <person name="Dalrymple B.P."/>
            <person name="de Bono B."/>
            <person name="Della Gatta G."/>
            <person name="di Bernardo D."/>
            <person name="Down T."/>
            <person name="Engstrom P."/>
            <person name="Fagiolini M."/>
            <person name="Faulkner G."/>
            <person name="Fletcher C.F."/>
            <person name="Fukushima T."/>
            <person name="Furuno M."/>
            <person name="Futaki S."/>
            <person name="Gariboldi M."/>
            <person name="Georgii-Hemming P."/>
            <person name="Gingeras T.R."/>
            <person name="Gojobori T."/>
            <person name="Green R.E."/>
            <person name="Gustincich S."/>
            <person name="Harbers M."/>
            <person name="Hayashi Y."/>
            <person name="Hensch T.K."/>
            <person name="Hirokawa N."/>
            <person name="Hill D."/>
            <person name="Huminiecki L."/>
            <person name="Iacono M."/>
            <person name="Ikeo K."/>
            <person name="Iwama A."/>
            <person name="Ishikawa T."/>
            <person name="Jakt M."/>
            <person name="Kanapin A."/>
            <person name="Katoh M."/>
            <person name="Kawasawa Y."/>
            <person name="Kelso J."/>
            <person name="Kitamura H."/>
            <person name="Kitano H."/>
            <person name="Kollias G."/>
            <person name="Krishnan S.P."/>
            <person name="Kruger A."/>
            <person name="Kummerfeld S.K."/>
            <person name="Kurochkin I.V."/>
            <person name="Lareau L.F."/>
            <person name="Lazarevic D."/>
            <person name="Lipovich L."/>
            <person name="Liu J."/>
            <person name="Liuni S."/>
            <person name="McWilliam S."/>
            <person name="Madan Babu M."/>
            <person name="Madera M."/>
            <person name="Marchionni L."/>
            <person name="Matsuda H."/>
            <person name="Matsuzawa S."/>
            <person name="Miki H."/>
            <person name="Mignone F."/>
            <person name="Miyake S."/>
            <person name="Morris K."/>
            <person name="Mottagui-Tabar S."/>
            <person name="Mulder N."/>
            <person name="Nakano N."/>
            <person name="Nakauchi H."/>
            <person name="Ng P."/>
            <person name="Nilsson R."/>
            <person name="Nishiguchi S."/>
            <person name="Nishikawa S."/>
            <person name="Nori F."/>
            <person name="Ohara O."/>
            <person name="Okazaki Y."/>
            <person name="Orlando V."/>
            <person name="Pang K.C."/>
            <person name="Pavan W.J."/>
            <person name="Pavesi G."/>
            <person name="Pesole G."/>
            <person name="Petrovsky N."/>
            <person name="Piazza S."/>
            <person name="Reed J."/>
            <person name="Reid J.F."/>
            <person name="Ring B.Z."/>
            <person name="Ringwald M."/>
            <person name="Rost B."/>
            <person name="Ruan Y."/>
            <person name="Salzberg S.L."/>
            <person name="Sandelin A."/>
            <person name="Schneider C."/>
            <person name="Schoenbach C."/>
            <person name="Sekiguchi K."/>
            <person name="Semple C.A."/>
            <person name="Seno S."/>
            <person name="Sessa L."/>
            <person name="Sheng Y."/>
            <person name="Shibata Y."/>
            <person name="Shimada H."/>
            <person name="Shimada K."/>
            <person name="Silva D."/>
            <person name="Sinclair B."/>
            <person name="Sperling S."/>
            <person name="Stupka E."/>
            <person name="Sugiura K."/>
            <person name="Sultana R."/>
            <person name="Takenaka Y."/>
            <person name="Taki K."/>
            <person name="Tammoja K."/>
            <person name="Tan S.L."/>
            <person name="Tang S."/>
            <person name="Taylor M.S."/>
            <person name="Tegner J."/>
            <person name="Teichmann S.A."/>
            <person name="Ueda H.R."/>
            <person name="van Nimwegen E."/>
            <person name="Verardo R."/>
            <person name="Wei C.L."/>
            <person name="Yagi K."/>
            <person name="Yamanishi H."/>
            <person name="Zabarovsky E."/>
            <person name="Zhu S."/>
            <person name="Zimmer A."/>
            <person name="Hide W."/>
            <person name="Bult C."/>
            <person name="Grimmond S.M."/>
            <person name="Teasdale R.D."/>
            <person name="Liu E.T."/>
            <person name="Brusic V."/>
            <person name="Quackenbush J."/>
            <person name="Wahlestedt C."/>
            <person name="Mattick J.S."/>
            <person name="Hume D.A."/>
            <person name="Kai C."/>
            <person name="Sasaki D."/>
            <person name="Tomaru Y."/>
            <person name="Fukuda S."/>
            <person name="Kanamori-Katayama M."/>
            <person name="Suzuki M."/>
            <person name="Aoki J."/>
            <person name="Arakawa T."/>
            <person name="Iida J."/>
            <person name="Imamura K."/>
            <person name="Itoh M."/>
            <person name="Kato T."/>
            <person name="Kawaji H."/>
            <person name="Kawagashira N."/>
            <person name="Kawashima T."/>
            <person name="Kojima M."/>
            <person name="Kondo S."/>
            <person name="Konno H."/>
            <person name="Nakano K."/>
            <person name="Ninomiya N."/>
            <person name="Nishio T."/>
            <person name="Okada M."/>
            <person name="Plessy C."/>
            <person name="Shibata K."/>
            <person name="Shiraki T."/>
            <person name="Suzuki S."/>
            <person name="Tagami M."/>
            <person name="Waki K."/>
            <person name="Watahiki A."/>
            <person name="Okamura-Oho Y."/>
            <person name="Suzuki H."/>
            <person name="Kawai J."/>
            <person name="Hayashizaki Y."/>
        </authorList>
    </citation>
    <scope>NUCLEOTIDE SEQUENCE [LARGE SCALE MRNA] (ISOFORMS 1 AND 2)</scope>
    <source>
        <strain>C57BL/6J</strain>
        <tissue>Cerebellum</tissue>
        <tissue>Vagina</tissue>
    </source>
</reference>
<reference key="2">
    <citation type="journal article" date="2004" name="Genome Res.">
        <title>The status, quality, and expansion of the NIH full-length cDNA project: the Mammalian Gene Collection (MGC).</title>
        <authorList>
            <consortium name="The MGC Project Team"/>
        </authorList>
    </citation>
    <scope>NUCLEOTIDE SEQUENCE [LARGE SCALE MRNA] (ISOFORM 3)</scope>
    <source>
        <strain>FVB/N</strain>
        <tissue>Mammary tumor</tissue>
    </source>
</reference>
<reference key="3">
    <citation type="journal article" date="2004" name="Biochem. Biophys. Res. Commun.">
        <title>Cloning and biochemical characterization of a novel mouse ADP-dependent glucokinase.</title>
        <authorList>
            <person name="Ronimus R.S."/>
            <person name="Morgan H.W."/>
        </authorList>
    </citation>
    <scope>CHARACTERIZATION</scope>
    <scope>SUBUNIT</scope>
    <scope>BIOPHYSICOCHEMICAL PROPERTIES</scope>
</reference>
<reference key="4">
    <citation type="journal article" date="2010" name="Cell">
        <title>A tissue-specific atlas of mouse protein phosphorylation and expression.</title>
        <authorList>
            <person name="Huttlin E.L."/>
            <person name="Jedrychowski M.P."/>
            <person name="Elias J.E."/>
            <person name="Goswami T."/>
            <person name="Rad R."/>
            <person name="Beausoleil S.A."/>
            <person name="Villen J."/>
            <person name="Haas W."/>
            <person name="Sowa M.E."/>
            <person name="Gygi S.P."/>
        </authorList>
    </citation>
    <scope>IDENTIFICATION BY MASS SPECTROMETRY [LARGE SCALE ANALYSIS]</scope>
    <source>
        <tissue>Brain</tissue>
        <tissue>Brown adipose tissue</tissue>
        <tissue>Heart</tissue>
        <tissue>Kidney</tissue>
        <tissue>Liver</tissue>
        <tissue>Lung</tissue>
        <tissue>Pancreas</tissue>
        <tissue>Spleen</tissue>
        <tissue>Testis</tissue>
    </source>
</reference>
<sequence>MALWRGSACAGFLALAVGCVFLLEPELPGTALRSLWSSLRLGPAPVPVGPLSPESRLAAAWDALIAQPARRWRRVAVGVNACVDVVISGVKLLQALGLSPGSGKDHAILHSRSDLEEAFLYFMGKGAAAERFFSDKETFHDIAQAASEFPGAQHYVGGNAALIGQRFAANTDLKVLLCGPIGPKLHELLDDNVFVPPESLQEEDEFHLILEYLAGEEWGPFKAPHANRFIFSHDLSNGAMNMLEVFVSSLEEFQPDLVVLSGLHMMEGQSKELQRKRLLEVVTAISDIPTGIPVHLELASMTNRELMSSIVHQQVFPAVASLGLNEQELLFLSQSASGPHSSLSSWDGVPDVGMVSDILFWILKEHGRSENRASDLTRIHFHTLVYHILATVDGHWANQLAAVAAGARVAGTQACATETIDTNRVSLRAPQEFTTSHLESGSRIVLNPDKPVVEWHREGITFHFTPVLVCKDPVRTVGLGDAISAEGLFYSEARPD</sequence>
<accession>Q8VDL4</accession>
<accession>Q8C7Y9</accession>
<accession>Q9D0H2</accession>